<accession>P59762</accession>
<dbReference type="EMBL" id="AJ316582">
    <property type="protein sequence ID" value="CAC88028.1"/>
    <property type="molecule type" value="Genomic_DNA"/>
</dbReference>
<dbReference type="RefSeq" id="NP_783216.1">
    <property type="nucleotide sequence ID" value="NC_004561.1"/>
</dbReference>
<dbReference type="SMR" id="P59762"/>
<dbReference type="GeneID" id="806446"/>
<dbReference type="GO" id="GO:0009535">
    <property type="term" value="C:chloroplast thylakoid membrane"/>
    <property type="evidence" value="ECO:0007669"/>
    <property type="project" value="UniProtKB-SubCell"/>
</dbReference>
<dbReference type="GO" id="GO:0009539">
    <property type="term" value="C:photosystem II reaction center"/>
    <property type="evidence" value="ECO:0007669"/>
    <property type="project" value="InterPro"/>
</dbReference>
<dbReference type="GO" id="GO:0015979">
    <property type="term" value="P:photosynthesis"/>
    <property type="evidence" value="ECO:0007669"/>
    <property type="project" value="UniProtKB-UniRule"/>
</dbReference>
<dbReference type="HAMAP" id="MF_01316">
    <property type="entry name" value="PSII_PsbI"/>
    <property type="match status" value="1"/>
</dbReference>
<dbReference type="InterPro" id="IPR003686">
    <property type="entry name" value="PSII_PsbI"/>
</dbReference>
<dbReference type="InterPro" id="IPR037271">
    <property type="entry name" value="PSII_PsbI_sf"/>
</dbReference>
<dbReference type="NCBIfam" id="NF002735">
    <property type="entry name" value="PRK02655.1"/>
    <property type="match status" value="1"/>
</dbReference>
<dbReference type="PANTHER" id="PTHR35772">
    <property type="entry name" value="PHOTOSYSTEM II REACTION CENTER PROTEIN I"/>
    <property type="match status" value="1"/>
</dbReference>
<dbReference type="PANTHER" id="PTHR35772:SF1">
    <property type="entry name" value="PHOTOSYSTEM II REACTION CENTER PROTEIN I"/>
    <property type="match status" value="1"/>
</dbReference>
<dbReference type="Pfam" id="PF02532">
    <property type="entry name" value="PsbI"/>
    <property type="match status" value="1"/>
</dbReference>
<dbReference type="SUPFAM" id="SSF161041">
    <property type="entry name" value="Photosystem II reaction center protein I, PsbI"/>
    <property type="match status" value="1"/>
</dbReference>
<comment type="function">
    <text evidence="1">One of the components of the core complex of photosystem II (PSII), required for its stability and/or assembly. PSII is a light-driven water:plastoquinone oxidoreductase that uses light energy to abstract electrons from H(2)O, generating O(2) and a proton gradient subsequently used for ATP formation. It consists of a core antenna complex that captures photons, and an electron transfer chain that converts photonic excitation into a charge separation.</text>
</comment>
<comment type="subunit">
    <text evidence="1">PSII is composed of 1 copy each of membrane proteins PsbA, PsbB, PsbC, PsbD, PsbE, PsbF, PsbH, PsbI, PsbJ, PsbK, PsbL, PsbM, PsbT, PsbX, PsbY, PsbZ, Psb30/Ycf12, at least 3 peripheral proteins of the oxygen-evolving complex and a large number of cofactors. It forms dimeric complexes.</text>
</comment>
<comment type="subcellular location">
    <subcellularLocation>
        <location evidence="1">Plastid</location>
        <location evidence="1">Chloroplast thylakoid membrane</location>
        <topology evidence="1">Single-pass membrane protein</topology>
    </subcellularLocation>
</comment>
<comment type="similarity">
    <text evidence="1">Belongs to the PsbI family.</text>
</comment>
<proteinExistence type="inferred from homology"/>
<gene>
    <name evidence="1" type="primary">psbI</name>
</gene>
<geneLocation type="chloroplast"/>
<organism>
    <name type="scientific">Atropa belladonna</name>
    <name type="common">Belladonna</name>
    <name type="synonym">Deadly nightshade</name>
    <dbReference type="NCBI Taxonomy" id="33113"/>
    <lineage>
        <taxon>Eukaryota</taxon>
        <taxon>Viridiplantae</taxon>
        <taxon>Streptophyta</taxon>
        <taxon>Embryophyta</taxon>
        <taxon>Tracheophyta</taxon>
        <taxon>Spermatophyta</taxon>
        <taxon>Magnoliopsida</taxon>
        <taxon>eudicotyledons</taxon>
        <taxon>Gunneridae</taxon>
        <taxon>Pentapetalae</taxon>
        <taxon>asterids</taxon>
        <taxon>lamiids</taxon>
        <taxon>Solanales</taxon>
        <taxon>Solanaceae</taxon>
        <taxon>Solanoideae</taxon>
        <taxon>Hyoscyameae</taxon>
        <taxon>Atropa</taxon>
    </lineage>
</organism>
<feature type="chain" id="PRO_0000219618" description="Photosystem II reaction center protein I">
    <location>
        <begin position="1"/>
        <end position="36"/>
    </location>
</feature>
<feature type="transmembrane region" description="Helical" evidence="1">
    <location>
        <begin position="4"/>
        <end position="24"/>
    </location>
</feature>
<protein>
    <recommendedName>
        <fullName evidence="1">Photosystem II reaction center protein I</fullName>
        <shortName evidence="1">PSII-I</shortName>
    </recommendedName>
    <alternativeName>
        <fullName evidence="1">PSII 4.8 kDa protein</fullName>
    </alternativeName>
</protein>
<sequence>MLTLKLFVYTVVIFFVSLFIFGFLSNDPGRNPGREE</sequence>
<name>PSBI_ATRBE</name>
<evidence type="ECO:0000255" key="1">
    <source>
        <dbReference type="HAMAP-Rule" id="MF_01316"/>
    </source>
</evidence>
<keyword id="KW-0150">Chloroplast</keyword>
<keyword id="KW-0472">Membrane</keyword>
<keyword id="KW-0602">Photosynthesis</keyword>
<keyword id="KW-0604">Photosystem II</keyword>
<keyword id="KW-0934">Plastid</keyword>
<keyword id="KW-0674">Reaction center</keyword>
<keyword id="KW-0793">Thylakoid</keyword>
<keyword id="KW-0812">Transmembrane</keyword>
<keyword id="KW-1133">Transmembrane helix</keyword>
<reference key="1">
    <citation type="journal article" date="2002" name="Mol. Biol. Evol.">
        <title>The plastid chromosome of Atropa belladonna and its comparison with that of Nicotiana tabacum: the role of RNA editing in generating divergence in the process of plant speciation.</title>
        <authorList>
            <person name="Schmitz-Linneweber C."/>
            <person name="Regel R."/>
            <person name="Du T.G."/>
            <person name="Hupfer H."/>
            <person name="Herrmann R.G."/>
            <person name="Maier R.M."/>
        </authorList>
    </citation>
    <scope>NUCLEOTIDE SEQUENCE [LARGE SCALE GENOMIC DNA]</scope>
    <source>
        <strain>cv. Ab5p(kan)</strain>
    </source>
</reference>